<keyword id="KW-0150">Chloroplast</keyword>
<keyword id="KW-0934">Plastid</keyword>
<keyword id="KW-1185">Reference proteome</keyword>
<keyword id="KW-0687">Ribonucleoprotein</keyword>
<keyword id="KW-0689">Ribosomal protein</keyword>
<keyword id="KW-0694">RNA-binding</keyword>
<keyword id="KW-0699">rRNA-binding</keyword>
<proteinExistence type="inferred from homology"/>
<feature type="chain" id="PRO_0000130987" description="Small ribosomal subunit protein uS14c">
    <location>
        <begin position="1"/>
        <end position="103"/>
    </location>
</feature>
<feature type="region of interest" description="Disordered" evidence="2">
    <location>
        <begin position="34"/>
        <end position="56"/>
    </location>
</feature>
<accession>Q95H62</accession>
<gene>
    <name evidence="1" type="primary">rps14</name>
</gene>
<reference key="1">
    <citation type="journal article" date="2000" name="Plant Mol. Biol. Rep.">
        <title>Chinese spring wheat (Triticum aestivum L.) chloroplast genome: complete sequence and contig clones.</title>
        <authorList>
            <person name="Ogihara Y."/>
            <person name="Isono K."/>
            <person name="Kojima T."/>
            <person name="Endo A."/>
            <person name="Hanaoka M."/>
            <person name="Shiina T."/>
            <person name="Terachi T."/>
            <person name="Utsugi S."/>
            <person name="Murata M."/>
            <person name="Mori N."/>
            <person name="Takumi S."/>
            <person name="Ikeo K."/>
            <person name="Gojobori T."/>
            <person name="Murai R."/>
            <person name="Murai K."/>
            <person name="Matsuoka Y."/>
            <person name="Ohnishi Y."/>
            <person name="Tajiri H."/>
            <person name="Tsunewaki K."/>
        </authorList>
    </citation>
    <scope>NUCLEOTIDE SEQUENCE [LARGE SCALE GENOMIC DNA]</scope>
    <source>
        <strain>cv. Chinese Spring</strain>
    </source>
</reference>
<protein>
    <recommendedName>
        <fullName evidence="1">Small ribosomal subunit protein uS14c</fullName>
    </recommendedName>
    <alternativeName>
        <fullName evidence="3">30S ribosomal protein S14, chloroplastic</fullName>
    </alternativeName>
</protein>
<comment type="function">
    <text evidence="1">Binds 16S rRNA, required for the assembly of 30S particles.</text>
</comment>
<comment type="subunit">
    <text evidence="1">Part of the 30S ribosomal subunit.</text>
</comment>
<comment type="subcellular location">
    <subcellularLocation>
        <location>Plastid</location>
        <location>Chloroplast</location>
    </subcellularLocation>
</comment>
<comment type="similarity">
    <text evidence="1">Belongs to the universal ribosomal protein uS14 family.</text>
</comment>
<sequence>MAKKSLIQREKKRQKLEQKYHLIRQSLKKKIRSKVSPLSLSEKTKMREKLQSLPRNSAPTRLHRRCFLTGRPRANYRHFGLSGHVLREMVYECLLPGATRSSW</sequence>
<evidence type="ECO:0000255" key="1">
    <source>
        <dbReference type="HAMAP-Rule" id="MF_00537"/>
    </source>
</evidence>
<evidence type="ECO:0000256" key="2">
    <source>
        <dbReference type="SAM" id="MobiDB-lite"/>
    </source>
</evidence>
<evidence type="ECO:0000305" key="3"/>
<organism>
    <name type="scientific">Triticum aestivum</name>
    <name type="common">Wheat</name>
    <dbReference type="NCBI Taxonomy" id="4565"/>
    <lineage>
        <taxon>Eukaryota</taxon>
        <taxon>Viridiplantae</taxon>
        <taxon>Streptophyta</taxon>
        <taxon>Embryophyta</taxon>
        <taxon>Tracheophyta</taxon>
        <taxon>Spermatophyta</taxon>
        <taxon>Magnoliopsida</taxon>
        <taxon>Liliopsida</taxon>
        <taxon>Poales</taxon>
        <taxon>Poaceae</taxon>
        <taxon>BOP clade</taxon>
        <taxon>Pooideae</taxon>
        <taxon>Triticodae</taxon>
        <taxon>Triticeae</taxon>
        <taxon>Triticinae</taxon>
        <taxon>Triticum</taxon>
    </lineage>
</organism>
<name>RR14_WHEAT</name>
<dbReference type="EMBL" id="AB042240">
    <property type="protein sequence ID" value="BAB47032.1"/>
    <property type="molecule type" value="Genomic_DNA"/>
</dbReference>
<dbReference type="RefSeq" id="NP_114257.1">
    <property type="nucleotide sequence ID" value="NC_002762.1"/>
</dbReference>
<dbReference type="SMR" id="Q95H62"/>
<dbReference type="STRING" id="4565.Q95H62"/>
<dbReference type="PaxDb" id="4565-EPlTAEP00000010010"/>
<dbReference type="EnsemblPlants" id="TraesARI5D03G03159430.1">
    <property type="protein sequence ID" value="TraesARI5D03G03159430.1.CDS1"/>
    <property type="gene ID" value="TraesARI5D03G03159430"/>
</dbReference>
<dbReference type="EnsemblPlants" id="TraesCS2B02G487300.1">
    <property type="protein sequence ID" value="TraesCS2B02G487300.1.cds1"/>
    <property type="gene ID" value="TraesCS2B02G487300"/>
</dbReference>
<dbReference type="EnsemblPlants" id="TraesCS2B03G1229000.1">
    <property type="protein sequence ID" value="TraesCS2B03G1229000.1.CDS1"/>
    <property type="gene ID" value="TraesCS2B03G1229000"/>
</dbReference>
<dbReference type="EnsemblPlants" id="TraesKAR5D01G0373810.1">
    <property type="protein sequence ID" value="cds.TraesKAR5D01G0373810.1"/>
    <property type="gene ID" value="TraesKAR5D01G0373810"/>
</dbReference>
<dbReference type="EnsemblPlants" id="TraesKAR6B01G0219580.1">
    <property type="protein sequence ID" value="cds.TraesKAR6B01G0219580.1"/>
    <property type="gene ID" value="TraesKAR6B01G0219580"/>
</dbReference>
<dbReference type="EnsemblPlants" id="TraesKAR7A01G0472700.1">
    <property type="protein sequence ID" value="cds.TraesKAR7A01G0472700.1"/>
    <property type="gene ID" value="TraesKAR7A01G0472700"/>
</dbReference>
<dbReference type="EnsemblPlants" id="TraesKARUn01G0028060.1">
    <property type="protein sequence ID" value="cds.TraesKARUn01G0028060.1"/>
    <property type="gene ID" value="TraesKARUn01G0028060"/>
</dbReference>
<dbReference type="EnsemblPlants" id="TraesKARUn01G0033550.1">
    <property type="protein sequence ID" value="cds.TraesKARUn01G0033550.1"/>
    <property type="gene ID" value="TraesKARUn01G0033550"/>
</dbReference>
<dbReference type="EnsemblPlants" id="TraesKARUn01G0035850.1">
    <property type="protein sequence ID" value="cds.TraesKARUn01G0035850.1"/>
    <property type="gene ID" value="TraesKARUn01G0035850"/>
</dbReference>
<dbReference type="EnsemblPlants" id="TraesKARUn01G0093530.1">
    <property type="protein sequence ID" value="cds.TraesKARUn01G0093530.1"/>
    <property type="gene ID" value="TraesKARUn01G0093530"/>
</dbReference>
<dbReference type="EnsemblPlants" id="TraesKARUn01G0093810.1">
    <property type="protein sequence ID" value="cds.TraesKARUn01G0093810.1"/>
    <property type="gene ID" value="TraesKARUn01G0093810"/>
</dbReference>
<dbReference type="EnsemblPlants" id="TraesKARUn01G0094470.1">
    <property type="protein sequence ID" value="cds.TraesKARUn01G0094470.1"/>
    <property type="gene ID" value="TraesKARUn01G0094470"/>
</dbReference>
<dbReference type="EnsemblPlants" id="TraesKARUn01G0097990.1">
    <property type="protein sequence ID" value="cds.TraesKARUn01G0097990.1"/>
    <property type="gene ID" value="TraesKARUn01G0097990"/>
</dbReference>
<dbReference type="EnsemblPlants" id="TraesKARUn01G0098090.1">
    <property type="protein sequence ID" value="cds.TraesKARUn01G0098090.1"/>
    <property type="gene ID" value="TraesKARUn01G0098090"/>
</dbReference>
<dbReference type="EnsemblPlants" id="TraesKARUn01G0098150.1">
    <property type="protein sequence ID" value="cds.TraesKARUn01G0098150.1"/>
    <property type="gene ID" value="TraesKARUn01G0098150"/>
</dbReference>
<dbReference type="EnsemblPlants" id="TraesKARUn01G0098480.1">
    <property type="protein sequence ID" value="cds.TraesKARUn01G0098480.1"/>
    <property type="gene ID" value="TraesKARUn01G0098480"/>
</dbReference>
<dbReference type="EnsemblPlants" id="TraesKARUn01G0098790.1">
    <property type="protein sequence ID" value="cds.TraesKARUn01G0098790.1"/>
    <property type="gene ID" value="TraesKARUn01G0098790"/>
</dbReference>
<dbReference type="EnsemblPlants" id="TraesKARUn01G0134610.1">
    <property type="protein sequence ID" value="cds.TraesKARUn01G0134610.1"/>
    <property type="gene ID" value="TraesKARUn01G0134610"/>
</dbReference>
<dbReference type="EnsemblPlants" id="TraesKARUn01G0157650.1">
    <property type="protein sequence ID" value="cds.TraesKARUn01G0157650.1"/>
    <property type="gene ID" value="TraesKARUn01G0157650"/>
</dbReference>
<dbReference type="EnsemblPlants" id="TraesKARUn01G0158010.1">
    <property type="protein sequence ID" value="cds.TraesKARUn01G0158010.1"/>
    <property type="gene ID" value="TraesKARUn01G0158010"/>
</dbReference>
<dbReference type="EnsemblPlants" id="TraesKARUn01G0158040.1">
    <property type="protein sequence ID" value="cds.TraesKARUn01G0158040.1"/>
    <property type="gene ID" value="TraesKARUn01G0158040"/>
</dbReference>
<dbReference type="EnsemblPlants" id="TraesKARUn01G0158100.1">
    <property type="protein sequence ID" value="cds.TraesKARUn01G0158100.1"/>
    <property type="gene ID" value="TraesKARUn01G0158100"/>
</dbReference>
<dbReference type="EnsemblPlants" id="TraesKARUn01G0171790.1">
    <property type="protein sequence ID" value="cds.TraesKARUn01G0171790.1"/>
    <property type="gene ID" value="TraesKARUn01G0171790"/>
</dbReference>
<dbReference type="EnsemblPlants" id="TraesKARUn01G0172830.1">
    <property type="protein sequence ID" value="cds.TraesKARUn01G0172830.1"/>
    <property type="gene ID" value="TraesKARUn01G0172830"/>
</dbReference>
<dbReference type="EnsemblPlants" id="TraesPARA_EIv1.0_1868870.1">
    <property type="protein sequence ID" value="TraesPARA_EIv1.0_1868870.1.CDS1"/>
    <property type="gene ID" value="TraesPARA_EIv1.0_1868870"/>
</dbReference>
<dbReference type="EnsemblPlants" id="TraesPARA_EIv1.0_2055070.1">
    <property type="protein sequence ID" value="TraesPARA_EIv1.0_2055070.1.CDS1"/>
    <property type="gene ID" value="TraesPARA_EIv1.0_2055070"/>
</dbReference>
<dbReference type="EnsemblPlants" id="TraesPARA_EIv1.0_2658150.1">
    <property type="protein sequence ID" value="TraesPARA_EIv1.0_2658150.1.CDS1"/>
    <property type="gene ID" value="TraesPARA_EIv1.0_2658150"/>
</dbReference>
<dbReference type="EnsemblPlants" id="TraesPARA_EIv1.0_2662890.1">
    <property type="protein sequence ID" value="TraesPARA_EIv1.0_2662890.1.CDS1"/>
    <property type="gene ID" value="TraesPARA_EIv1.0_2662890"/>
</dbReference>
<dbReference type="EnsemblPlants" id="TraesPARA_EIv1.0_2663710.1">
    <property type="protein sequence ID" value="TraesPARA_EIv1.0_2663710.1.CDS1"/>
    <property type="gene ID" value="TraesPARA_EIv1.0_2663710"/>
</dbReference>
<dbReference type="EnsemblPlants" id="TraesPARA_EIv1.0_2671960.1">
    <property type="protein sequence ID" value="TraesPARA_EIv1.0_2671960.1.CDS1"/>
    <property type="gene ID" value="TraesPARA_EIv1.0_2671960"/>
</dbReference>
<dbReference type="EnsemblPlants" id="TraesPARA_EIv1.0_2674610.1">
    <property type="protein sequence ID" value="TraesPARA_EIv1.0_2674610.1.CDS1"/>
    <property type="gene ID" value="TraesPARA_EIv1.0_2674610"/>
</dbReference>
<dbReference type="EnsemblPlants" id="TraesPARA_EIv1.0_2675920.1">
    <property type="protein sequence ID" value="TraesPARA_EIv1.0_2675920.1.CDS1"/>
    <property type="gene ID" value="TraesPARA_EIv1.0_2675920"/>
</dbReference>
<dbReference type="EnsemblPlants" id="TraesPARA_EIv1.0_2676620.1">
    <property type="protein sequence ID" value="TraesPARA_EIv1.0_2676620.1.CDS1"/>
    <property type="gene ID" value="TraesPARA_EIv1.0_2676620"/>
</dbReference>
<dbReference type="EnsemblPlants" id="TraesPARA_EIv1.0_2677500.1">
    <property type="protein sequence ID" value="TraesPARA_EIv1.0_2677500.1.CDS1"/>
    <property type="gene ID" value="TraesPARA_EIv1.0_2677500"/>
</dbReference>
<dbReference type="EnsemblPlants" id="TraesPARA_EIv1.0_2681170.1">
    <property type="protein sequence ID" value="TraesPARA_EIv1.0_2681170.1.CDS1"/>
    <property type="gene ID" value="TraesPARA_EIv1.0_2681170"/>
</dbReference>
<dbReference type="EnsemblPlants" id="TraesRN1B0101121900.1">
    <property type="protein sequence ID" value="TraesRN1B0101121900.1"/>
    <property type="gene ID" value="TraesRN1B0101121900"/>
</dbReference>
<dbReference type="GeneID" id="803112"/>
<dbReference type="Gramene" id="TraesARI5D03G03159430.1">
    <property type="protein sequence ID" value="TraesARI5D03G03159430.1.CDS1"/>
    <property type="gene ID" value="TraesARI5D03G03159430"/>
</dbReference>
<dbReference type="Gramene" id="TraesCS2B02G487300.1">
    <property type="protein sequence ID" value="TraesCS2B02G487300.1.cds1"/>
    <property type="gene ID" value="TraesCS2B02G487300"/>
</dbReference>
<dbReference type="Gramene" id="TraesCS2B03G1229000.1">
    <property type="protein sequence ID" value="TraesCS2B03G1229000.1.CDS1"/>
    <property type="gene ID" value="TraesCS2B03G1229000"/>
</dbReference>
<dbReference type="Gramene" id="TraesKAR5D01G0373810.1">
    <property type="protein sequence ID" value="cds.TraesKAR5D01G0373810.1"/>
    <property type="gene ID" value="TraesKAR5D01G0373810"/>
</dbReference>
<dbReference type="Gramene" id="TraesKAR6B01G0219580.1">
    <property type="protein sequence ID" value="cds.TraesKAR6B01G0219580.1"/>
    <property type="gene ID" value="TraesKAR6B01G0219580"/>
</dbReference>
<dbReference type="Gramene" id="TraesKAR7A01G0472700.1">
    <property type="protein sequence ID" value="cds.TraesKAR7A01G0472700.1"/>
    <property type="gene ID" value="TraesKAR7A01G0472700"/>
</dbReference>
<dbReference type="Gramene" id="TraesKARUn01G0028060.1">
    <property type="protein sequence ID" value="cds.TraesKARUn01G0028060.1"/>
    <property type="gene ID" value="TraesKARUn01G0028060"/>
</dbReference>
<dbReference type="Gramene" id="TraesKARUn01G0033550.1">
    <property type="protein sequence ID" value="cds.TraesKARUn01G0033550.1"/>
    <property type="gene ID" value="TraesKARUn01G0033550"/>
</dbReference>
<dbReference type="Gramene" id="TraesKARUn01G0035850.1">
    <property type="protein sequence ID" value="cds.TraesKARUn01G0035850.1"/>
    <property type="gene ID" value="TraesKARUn01G0035850"/>
</dbReference>
<dbReference type="Gramene" id="TraesKARUn01G0093530.1">
    <property type="protein sequence ID" value="cds.TraesKARUn01G0093530.1"/>
    <property type="gene ID" value="TraesKARUn01G0093530"/>
</dbReference>
<dbReference type="Gramene" id="TraesKARUn01G0093810.1">
    <property type="protein sequence ID" value="cds.TraesKARUn01G0093810.1"/>
    <property type="gene ID" value="TraesKARUn01G0093810"/>
</dbReference>
<dbReference type="Gramene" id="TraesKARUn01G0094470.1">
    <property type="protein sequence ID" value="cds.TraesKARUn01G0094470.1"/>
    <property type="gene ID" value="TraesKARUn01G0094470"/>
</dbReference>
<dbReference type="Gramene" id="TraesKARUn01G0097990.1">
    <property type="protein sequence ID" value="cds.TraesKARUn01G0097990.1"/>
    <property type="gene ID" value="TraesKARUn01G0097990"/>
</dbReference>
<dbReference type="Gramene" id="TraesKARUn01G0098090.1">
    <property type="protein sequence ID" value="cds.TraesKARUn01G0098090.1"/>
    <property type="gene ID" value="TraesKARUn01G0098090"/>
</dbReference>
<dbReference type="Gramene" id="TraesKARUn01G0098150.1">
    <property type="protein sequence ID" value="cds.TraesKARUn01G0098150.1"/>
    <property type="gene ID" value="TraesKARUn01G0098150"/>
</dbReference>
<dbReference type="Gramene" id="TraesKARUn01G0098480.1">
    <property type="protein sequence ID" value="cds.TraesKARUn01G0098480.1"/>
    <property type="gene ID" value="TraesKARUn01G0098480"/>
</dbReference>
<dbReference type="Gramene" id="TraesKARUn01G0098790.1">
    <property type="protein sequence ID" value="cds.TraesKARUn01G0098790.1"/>
    <property type="gene ID" value="TraesKARUn01G0098790"/>
</dbReference>
<dbReference type="Gramene" id="TraesKARUn01G0134610.1">
    <property type="protein sequence ID" value="cds.TraesKARUn01G0134610.1"/>
    <property type="gene ID" value="TraesKARUn01G0134610"/>
</dbReference>
<dbReference type="Gramene" id="TraesKARUn01G0157650.1">
    <property type="protein sequence ID" value="cds.TraesKARUn01G0157650.1"/>
    <property type="gene ID" value="TraesKARUn01G0157650"/>
</dbReference>
<dbReference type="Gramene" id="TraesKARUn01G0158010.1">
    <property type="protein sequence ID" value="cds.TraesKARUn01G0158010.1"/>
    <property type="gene ID" value="TraesKARUn01G0158010"/>
</dbReference>
<dbReference type="Gramene" id="TraesKARUn01G0158040.1">
    <property type="protein sequence ID" value="cds.TraesKARUn01G0158040.1"/>
    <property type="gene ID" value="TraesKARUn01G0158040"/>
</dbReference>
<dbReference type="Gramene" id="TraesKARUn01G0158100.1">
    <property type="protein sequence ID" value="cds.TraesKARUn01G0158100.1"/>
    <property type="gene ID" value="TraesKARUn01G0158100"/>
</dbReference>
<dbReference type="Gramene" id="TraesKARUn01G0171790.1">
    <property type="protein sequence ID" value="cds.TraesKARUn01G0171790.1"/>
    <property type="gene ID" value="TraesKARUn01G0171790"/>
</dbReference>
<dbReference type="Gramene" id="TraesKARUn01G0172830.1">
    <property type="protein sequence ID" value="cds.TraesKARUn01G0172830.1"/>
    <property type="gene ID" value="TraesKARUn01G0172830"/>
</dbReference>
<dbReference type="Gramene" id="TraesPARA_EIv1.0_1868870.1">
    <property type="protein sequence ID" value="TraesPARA_EIv1.0_1868870.1.CDS1"/>
    <property type="gene ID" value="TraesPARA_EIv1.0_1868870"/>
</dbReference>
<dbReference type="Gramene" id="TraesPARA_EIv1.0_2055070.1">
    <property type="protein sequence ID" value="TraesPARA_EIv1.0_2055070.1.CDS1"/>
    <property type="gene ID" value="TraesPARA_EIv1.0_2055070"/>
</dbReference>
<dbReference type="Gramene" id="TraesPARA_EIv1.0_2658150.1">
    <property type="protein sequence ID" value="TraesPARA_EIv1.0_2658150.1.CDS1"/>
    <property type="gene ID" value="TraesPARA_EIv1.0_2658150"/>
</dbReference>
<dbReference type="Gramene" id="TraesPARA_EIv1.0_2662890.1">
    <property type="protein sequence ID" value="TraesPARA_EIv1.0_2662890.1.CDS1"/>
    <property type="gene ID" value="TraesPARA_EIv1.0_2662890"/>
</dbReference>
<dbReference type="Gramene" id="TraesPARA_EIv1.0_2663710.1">
    <property type="protein sequence ID" value="TraesPARA_EIv1.0_2663710.1.CDS1"/>
    <property type="gene ID" value="TraesPARA_EIv1.0_2663710"/>
</dbReference>
<dbReference type="Gramene" id="TraesPARA_EIv1.0_2671960.1">
    <property type="protein sequence ID" value="TraesPARA_EIv1.0_2671960.1.CDS1"/>
    <property type="gene ID" value="TraesPARA_EIv1.0_2671960"/>
</dbReference>
<dbReference type="Gramene" id="TraesPARA_EIv1.0_2674610.1">
    <property type="protein sequence ID" value="TraesPARA_EIv1.0_2674610.1.CDS1"/>
    <property type="gene ID" value="TraesPARA_EIv1.0_2674610"/>
</dbReference>
<dbReference type="Gramene" id="TraesPARA_EIv1.0_2675920.1">
    <property type="protein sequence ID" value="TraesPARA_EIv1.0_2675920.1.CDS1"/>
    <property type="gene ID" value="TraesPARA_EIv1.0_2675920"/>
</dbReference>
<dbReference type="Gramene" id="TraesPARA_EIv1.0_2676620.1">
    <property type="protein sequence ID" value="TraesPARA_EIv1.0_2676620.1.CDS1"/>
    <property type="gene ID" value="TraesPARA_EIv1.0_2676620"/>
</dbReference>
<dbReference type="Gramene" id="TraesPARA_EIv1.0_2677500.1">
    <property type="protein sequence ID" value="TraesPARA_EIv1.0_2677500.1.CDS1"/>
    <property type="gene ID" value="TraesPARA_EIv1.0_2677500"/>
</dbReference>
<dbReference type="Gramene" id="TraesPARA_EIv1.0_2681170.1">
    <property type="protein sequence ID" value="TraesPARA_EIv1.0_2681170.1.CDS1"/>
    <property type="gene ID" value="TraesPARA_EIv1.0_2681170"/>
</dbReference>
<dbReference type="Gramene" id="TraesRN1B0101121900.1">
    <property type="protein sequence ID" value="TraesRN1B0101121900.1"/>
    <property type="gene ID" value="TraesRN1B0101121900"/>
</dbReference>
<dbReference type="KEGG" id="taes:803112"/>
<dbReference type="eggNOG" id="KOG1741">
    <property type="taxonomic scope" value="Eukaryota"/>
</dbReference>
<dbReference type="HOGENOM" id="CLU_139869_0_1_1"/>
<dbReference type="OMA" id="RIKFRDL"/>
<dbReference type="OrthoDB" id="413436at2759"/>
<dbReference type="Proteomes" id="UP000019116">
    <property type="component" value="Chloroplast"/>
</dbReference>
<dbReference type="ExpressionAtlas" id="Q95H62">
    <property type="expression patterns" value="differential"/>
</dbReference>
<dbReference type="GO" id="GO:0009507">
    <property type="term" value="C:chloroplast"/>
    <property type="evidence" value="ECO:0007669"/>
    <property type="project" value="UniProtKB-SubCell"/>
</dbReference>
<dbReference type="GO" id="GO:0015935">
    <property type="term" value="C:small ribosomal subunit"/>
    <property type="evidence" value="ECO:0000318"/>
    <property type="project" value="GO_Central"/>
</dbReference>
<dbReference type="GO" id="GO:0019843">
    <property type="term" value="F:rRNA binding"/>
    <property type="evidence" value="ECO:0007669"/>
    <property type="project" value="UniProtKB-UniRule"/>
</dbReference>
<dbReference type="GO" id="GO:0003735">
    <property type="term" value="F:structural constituent of ribosome"/>
    <property type="evidence" value="ECO:0000318"/>
    <property type="project" value="GO_Central"/>
</dbReference>
<dbReference type="GO" id="GO:0006412">
    <property type="term" value="P:translation"/>
    <property type="evidence" value="ECO:0000318"/>
    <property type="project" value="GO_Central"/>
</dbReference>
<dbReference type="FunFam" id="1.10.287.1480:FF:000001">
    <property type="entry name" value="30S ribosomal protein S14"/>
    <property type="match status" value="1"/>
</dbReference>
<dbReference type="Gene3D" id="1.10.287.1480">
    <property type="match status" value="1"/>
</dbReference>
<dbReference type="HAMAP" id="MF_00537">
    <property type="entry name" value="Ribosomal_uS14_1"/>
    <property type="match status" value="1"/>
</dbReference>
<dbReference type="InterPro" id="IPR001209">
    <property type="entry name" value="Ribosomal_uS14"/>
</dbReference>
<dbReference type="InterPro" id="IPR023036">
    <property type="entry name" value="Ribosomal_uS14_bac/plastid"/>
</dbReference>
<dbReference type="InterPro" id="IPR018271">
    <property type="entry name" value="Ribosomal_uS14_CS"/>
</dbReference>
<dbReference type="NCBIfam" id="NF006477">
    <property type="entry name" value="PRK08881.1"/>
    <property type="match status" value="1"/>
</dbReference>
<dbReference type="PANTHER" id="PTHR19836">
    <property type="entry name" value="30S RIBOSOMAL PROTEIN S14"/>
    <property type="match status" value="1"/>
</dbReference>
<dbReference type="PANTHER" id="PTHR19836:SF19">
    <property type="entry name" value="SMALL RIBOSOMAL SUBUNIT PROTEIN US14M"/>
    <property type="match status" value="1"/>
</dbReference>
<dbReference type="Pfam" id="PF00253">
    <property type="entry name" value="Ribosomal_S14"/>
    <property type="match status" value="1"/>
</dbReference>
<dbReference type="SUPFAM" id="SSF57716">
    <property type="entry name" value="Glucocorticoid receptor-like (DNA-binding domain)"/>
    <property type="match status" value="1"/>
</dbReference>
<dbReference type="PROSITE" id="PS00527">
    <property type="entry name" value="RIBOSOMAL_S14"/>
    <property type="match status" value="1"/>
</dbReference>
<geneLocation type="chloroplast"/>